<name>RL11_METMJ</name>
<protein>
    <recommendedName>
        <fullName evidence="1">Large ribosomal subunit protein uL11</fullName>
    </recommendedName>
    <alternativeName>
        <fullName evidence="2">50S ribosomal protein L11</fullName>
    </alternativeName>
</protein>
<feature type="chain" id="PRO_1000046214" description="Large ribosomal subunit protein uL11">
    <location>
        <begin position="1"/>
        <end position="158"/>
    </location>
</feature>
<comment type="function">
    <text evidence="1">Forms part of the ribosomal stalk which helps the ribosome interact with GTP-bound translation factors.</text>
</comment>
<comment type="subunit">
    <text evidence="1">Part of the ribosomal stalk of the 50S ribosomal subunit. Interacts with L10 and the large rRNA to form the base of the stalk. L10 forms an elongated spine to which L12 dimers bind in a sequential fashion forming a multimeric L10(L12)X complex.</text>
</comment>
<comment type="similarity">
    <text evidence="1">Belongs to the universal ribosomal protein uL11 family.</text>
</comment>
<accession>A3CSJ5</accession>
<gene>
    <name evidence="1" type="primary">rpl11</name>
    <name type="ordered locus">Memar_0412</name>
</gene>
<keyword id="KW-0687">Ribonucleoprotein</keyword>
<keyword id="KW-0689">Ribosomal protein</keyword>
<keyword id="KW-0694">RNA-binding</keyword>
<keyword id="KW-0699">rRNA-binding</keyword>
<organism>
    <name type="scientific">Methanoculleus marisnigri (strain ATCC 35101 / DSM 1498 / JR1)</name>
    <dbReference type="NCBI Taxonomy" id="368407"/>
    <lineage>
        <taxon>Archaea</taxon>
        <taxon>Methanobacteriati</taxon>
        <taxon>Methanobacteriota</taxon>
        <taxon>Stenosarchaea group</taxon>
        <taxon>Methanomicrobia</taxon>
        <taxon>Methanomicrobiales</taxon>
        <taxon>Methanomicrobiaceae</taxon>
        <taxon>Methanoculleus</taxon>
    </lineage>
</organism>
<evidence type="ECO:0000255" key="1">
    <source>
        <dbReference type="HAMAP-Rule" id="MF_00736"/>
    </source>
</evidence>
<evidence type="ECO:0000305" key="2"/>
<proteinExistence type="inferred from homology"/>
<reference key="1">
    <citation type="journal article" date="2009" name="Stand. Genomic Sci.">
        <title>Complete genome sequence of Methanoculleus marisnigri Romesser et al. 1981 type strain JR1.</title>
        <authorList>
            <person name="Anderson I.J."/>
            <person name="Sieprawska-Lupa M."/>
            <person name="Lapidus A."/>
            <person name="Nolan M."/>
            <person name="Copeland A."/>
            <person name="Glavina Del Rio T."/>
            <person name="Tice H."/>
            <person name="Dalin E."/>
            <person name="Barry K."/>
            <person name="Saunders E."/>
            <person name="Han C."/>
            <person name="Brettin T."/>
            <person name="Detter J.C."/>
            <person name="Bruce D."/>
            <person name="Mikhailova N."/>
            <person name="Pitluck S."/>
            <person name="Hauser L."/>
            <person name="Land M."/>
            <person name="Lucas S."/>
            <person name="Richardson P."/>
            <person name="Whitman W.B."/>
            <person name="Kyrpides N.C."/>
        </authorList>
    </citation>
    <scope>NUCLEOTIDE SEQUENCE [LARGE SCALE GENOMIC DNA]</scope>
    <source>
        <strain>ATCC 35101 / DSM 1498 / JR1</strain>
    </source>
</reference>
<sequence>MAETVEVLVPGGKATAGPPLGPALGPLGINVKAVVDDINKKTAEFNGMQVPVTVTVDDKKNFTIEVGIPPTTALVMKEAGITKGSTEPGALVAGDLPLEAAVRIARMKFDGMLSYDLKSAVKEVLGTCVSVGVTVEGKKPREMIQAVNNGEYDGVLVA</sequence>
<dbReference type="EMBL" id="CP000562">
    <property type="protein sequence ID" value="ABN56345.1"/>
    <property type="molecule type" value="Genomic_DNA"/>
</dbReference>
<dbReference type="RefSeq" id="WP_011843255.1">
    <property type="nucleotide sequence ID" value="NC_009051.1"/>
</dbReference>
<dbReference type="SMR" id="A3CSJ5"/>
<dbReference type="STRING" id="368407.Memar_0412"/>
<dbReference type="GeneID" id="4845963"/>
<dbReference type="KEGG" id="mem:Memar_0412"/>
<dbReference type="eggNOG" id="arCOG04372">
    <property type="taxonomic scope" value="Archaea"/>
</dbReference>
<dbReference type="HOGENOM" id="CLU_074237_4_0_2"/>
<dbReference type="OrthoDB" id="8842at2157"/>
<dbReference type="Proteomes" id="UP000002146">
    <property type="component" value="Chromosome"/>
</dbReference>
<dbReference type="GO" id="GO:0015934">
    <property type="term" value="C:large ribosomal subunit"/>
    <property type="evidence" value="ECO:0007669"/>
    <property type="project" value="TreeGrafter"/>
</dbReference>
<dbReference type="GO" id="GO:0070180">
    <property type="term" value="F:large ribosomal subunit rRNA binding"/>
    <property type="evidence" value="ECO:0007669"/>
    <property type="project" value="UniProtKB-UniRule"/>
</dbReference>
<dbReference type="GO" id="GO:0003735">
    <property type="term" value="F:structural constituent of ribosome"/>
    <property type="evidence" value="ECO:0007669"/>
    <property type="project" value="InterPro"/>
</dbReference>
<dbReference type="GO" id="GO:0006412">
    <property type="term" value="P:translation"/>
    <property type="evidence" value="ECO:0007669"/>
    <property type="project" value="UniProtKB-UniRule"/>
</dbReference>
<dbReference type="CDD" id="cd00349">
    <property type="entry name" value="Ribosomal_L11"/>
    <property type="match status" value="1"/>
</dbReference>
<dbReference type="FunFam" id="3.30.1550.10:FF:000007">
    <property type="entry name" value="50S ribosomal protein L11"/>
    <property type="match status" value="1"/>
</dbReference>
<dbReference type="Gene3D" id="1.10.10.250">
    <property type="entry name" value="Ribosomal protein L11, C-terminal domain"/>
    <property type="match status" value="1"/>
</dbReference>
<dbReference type="Gene3D" id="3.30.1550.10">
    <property type="entry name" value="Ribosomal protein L11/L12, N-terminal domain"/>
    <property type="match status" value="1"/>
</dbReference>
<dbReference type="HAMAP" id="MF_00736">
    <property type="entry name" value="Ribosomal_uL11"/>
    <property type="match status" value="1"/>
</dbReference>
<dbReference type="InterPro" id="IPR000911">
    <property type="entry name" value="Ribosomal_uL11"/>
</dbReference>
<dbReference type="InterPro" id="IPR020783">
    <property type="entry name" value="Ribosomal_uL11_C"/>
</dbReference>
<dbReference type="InterPro" id="IPR036769">
    <property type="entry name" value="Ribosomal_uL11_C_sf"/>
</dbReference>
<dbReference type="InterPro" id="IPR020785">
    <property type="entry name" value="Ribosomal_uL11_CS"/>
</dbReference>
<dbReference type="InterPro" id="IPR020784">
    <property type="entry name" value="Ribosomal_uL11_N"/>
</dbReference>
<dbReference type="InterPro" id="IPR036796">
    <property type="entry name" value="Ribosomal_uL11_N_sf"/>
</dbReference>
<dbReference type="NCBIfam" id="NF002232">
    <property type="entry name" value="PRK01143.1"/>
    <property type="match status" value="1"/>
</dbReference>
<dbReference type="PANTHER" id="PTHR11661">
    <property type="entry name" value="60S RIBOSOMAL PROTEIN L12"/>
    <property type="match status" value="1"/>
</dbReference>
<dbReference type="PANTHER" id="PTHR11661:SF1">
    <property type="entry name" value="LARGE RIBOSOMAL SUBUNIT PROTEIN UL11M"/>
    <property type="match status" value="1"/>
</dbReference>
<dbReference type="Pfam" id="PF00298">
    <property type="entry name" value="Ribosomal_L11"/>
    <property type="match status" value="1"/>
</dbReference>
<dbReference type="Pfam" id="PF03946">
    <property type="entry name" value="Ribosomal_L11_N"/>
    <property type="match status" value="1"/>
</dbReference>
<dbReference type="SMART" id="SM00649">
    <property type="entry name" value="RL11"/>
    <property type="match status" value="1"/>
</dbReference>
<dbReference type="SUPFAM" id="SSF54747">
    <property type="entry name" value="Ribosomal L11/L12e N-terminal domain"/>
    <property type="match status" value="1"/>
</dbReference>
<dbReference type="SUPFAM" id="SSF46906">
    <property type="entry name" value="Ribosomal protein L11, C-terminal domain"/>
    <property type="match status" value="1"/>
</dbReference>
<dbReference type="PROSITE" id="PS00359">
    <property type="entry name" value="RIBOSOMAL_L11"/>
    <property type="match status" value="1"/>
</dbReference>